<organism>
    <name type="scientific">Homo sapiens</name>
    <name type="common">Human</name>
    <dbReference type="NCBI Taxonomy" id="9606"/>
    <lineage>
        <taxon>Eukaryota</taxon>
        <taxon>Metazoa</taxon>
        <taxon>Chordata</taxon>
        <taxon>Craniata</taxon>
        <taxon>Vertebrata</taxon>
        <taxon>Euteleostomi</taxon>
        <taxon>Mammalia</taxon>
        <taxon>Eutheria</taxon>
        <taxon>Euarchontoglires</taxon>
        <taxon>Primates</taxon>
        <taxon>Haplorrhini</taxon>
        <taxon>Catarrhini</taxon>
        <taxon>Hominidae</taxon>
        <taxon>Homo</taxon>
    </lineage>
</organism>
<comment type="function">
    <text evidence="5">Heparin-binding protein which binds to FGF2, prevents binding of FGF2 to heparin and probably inhibits immobilization of FGF2 on extracellular matrix glycosaminoglycans, allowing its release and subsequent activation of FGFR signaling which leads to increased vascular permeability.</text>
</comment>
<comment type="subunit">
    <text evidence="5">Interacts with FGF2.</text>
</comment>
<comment type="subcellular location">
    <subcellularLocation>
        <location evidence="5">Secreted</location>
    </subcellularLocation>
</comment>
<comment type="similarity">
    <text evidence="6">Belongs to the fibroblast growth factor-binding protein family.</text>
</comment>
<evidence type="ECO:0000250" key="1"/>
<evidence type="ECO:0000255" key="2"/>
<evidence type="ECO:0000256" key="3">
    <source>
        <dbReference type="SAM" id="MobiDB-lite"/>
    </source>
</evidence>
<evidence type="ECO:0000269" key="4">
    <source>
    </source>
</evidence>
<evidence type="ECO:0000269" key="5">
    <source>
    </source>
</evidence>
<evidence type="ECO:0000305" key="6"/>
<gene>
    <name type="primary">FGFBP3</name>
    <name type="synonym">C10orf13</name>
    <name type="ORF">PSEC0101</name>
</gene>
<reference key="1">
    <citation type="submission" date="2006-04" db="EMBL/GenBank/DDBJ databases">
        <title>Identification and characterization of a novel member of the fibroblast growth factor-binding protein family, FGF-BP3.</title>
        <authorList>
            <person name="Swift M.R."/>
            <person name="Tassi E."/>
            <person name="Wellstein A."/>
        </authorList>
    </citation>
    <scope>NUCLEOTIDE SEQUENCE [MRNA]</scope>
</reference>
<reference key="2">
    <citation type="journal article" date="2004" name="Nat. Genet.">
        <title>Complete sequencing and characterization of 21,243 full-length human cDNAs.</title>
        <authorList>
            <person name="Ota T."/>
            <person name="Suzuki Y."/>
            <person name="Nishikawa T."/>
            <person name="Otsuki T."/>
            <person name="Sugiyama T."/>
            <person name="Irie R."/>
            <person name="Wakamatsu A."/>
            <person name="Hayashi K."/>
            <person name="Sato H."/>
            <person name="Nagai K."/>
            <person name="Kimura K."/>
            <person name="Makita H."/>
            <person name="Sekine M."/>
            <person name="Obayashi M."/>
            <person name="Nishi T."/>
            <person name="Shibahara T."/>
            <person name="Tanaka T."/>
            <person name="Ishii S."/>
            <person name="Yamamoto J."/>
            <person name="Saito K."/>
            <person name="Kawai Y."/>
            <person name="Isono Y."/>
            <person name="Nakamura Y."/>
            <person name="Nagahari K."/>
            <person name="Murakami K."/>
            <person name="Yasuda T."/>
            <person name="Iwayanagi T."/>
            <person name="Wagatsuma M."/>
            <person name="Shiratori A."/>
            <person name="Sudo H."/>
            <person name="Hosoiri T."/>
            <person name="Kaku Y."/>
            <person name="Kodaira H."/>
            <person name="Kondo H."/>
            <person name="Sugawara M."/>
            <person name="Takahashi M."/>
            <person name="Kanda K."/>
            <person name="Yokoi T."/>
            <person name="Furuya T."/>
            <person name="Kikkawa E."/>
            <person name="Omura Y."/>
            <person name="Abe K."/>
            <person name="Kamihara K."/>
            <person name="Katsuta N."/>
            <person name="Sato K."/>
            <person name="Tanikawa M."/>
            <person name="Yamazaki M."/>
            <person name="Ninomiya K."/>
            <person name="Ishibashi T."/>
            <person name="Yamashita H."/>
            <person name="Murakawa K."/>
            <person name="Fujimori K."/>
            <person name="Tanai H."/>
            <person name="Kimata M."/>
            <person name="Watanabe M."/>
            <person name="Hiraoka S."/>
            <person name="Chiba Y."/>
            <person name="Ishida S."/>
            <person name="Ono Y."/>
            <person name="Takiguchi S."/>
            <person name="Watanabe S."/>
            <person name="Yosida M."/>
            <person name="Hotuta T."/>
            <person name="Kusano J."/>
            <person name="Kanehori K."/>
            <person name="Takahashi-Fujii A."/>
            <person name="Hara H."/>
            <person name="Tanase T.-O."/>
            <person name="Nomura Y."/>
            <person name="Togiya S."/>
            <person name="Komai F."/>
            <person name="Hara R."/>
            <person name="Takeuchi K."/>
            <person name="Arita M."/>
            <person name="Imose N."/>
            <person name="Musashino K."/>
            <person name="Yuuki H."/>
            <person name="Oshima A."/>
            <person name="Sasaki N."/>
            <person name="Aotsuka S."/>
            <person name="Yoshikawa Y."/>
            <person name="Matsunawa H."/>
            <person name="Ichihara T."/>
            <person name="Shiohata N."/>
            <person name="Sano S."/>
            <person name="Moriya S."/>
            <person name="Momiyama H."/>
            <person name="Satoh N."/>
            <person name="Takami S."/>
            <person name="Terashima Y."/>
            <person name="Suzuki O."/>
            <person name="Nakagawa S."/>
            <person name="Senoh A."/>
            <person name="Mizoguchi H."/>
            <person name="Goto Y."/>
            <person name="Shimizu F."/>
            <person name="Wakebe H."/>
            <person name="Hishigaki H."/>
            <person name="Watanabe T."/>
            <person name="Sugiyama A."/>
            <person name="Takemoto M."/>
            <person name="Kawakami B."/>
            <person name="Yamazaki M."/>
            <person name="Watanabe K."/>
            <person name="Kumagai A."/>
            <person name="Itakura S."/>
            <person name="Fukuzumi Y."/>
            <person name="Fujimori Y."/>
            <person name="Komiyama M."/>
            <person name="Tashiro H."/>
            <person name="Tanigami A."/>
            <person name="Fujiwara T."/>
            <person name="Ono T."/>
            <person name="Yamada K."/>
            <person name="Fujii Y."/>
            <person name="Ozaki K."/>
            <person name="Hirao M."/>
            <person name="Ohmori Y."/>
            <person name="Kawabata A."/>
            <person name="Hikiji T."/>
            <person name="Kobatake N."/>
            <person name="Inagaki H."/>
            <person name="Ikema Y."/>
            <person name="Okamoto S."/>
            <person name="Okitani R."/>
            <person name="Kawakami T."/>
            <person name="Noguchi S."/>
            <person name="Itoh T."/>
            <person name="Shigeta K."/>
            <person name="Senba T."/>
            <person name="Matsumura K."/>
            <person name="Nakajima Y."/>
            <person name="Mizuno T."/>
            <person name="Morinaga M."/>
            <person name="Sasaki M."/>
            <person name="Togashi T."/>
            <person name="Oyama M."/>
            <person name="Hata H."/>
            <person name="Watanabe M."/>
            <person name="Komatsu T."/>
            <person name="Mizushima-Sugano J."/>
            <person name="Satoh T."/>
            <person name="Shirai Y."/>
            <person name="Takahashi Y."/>
            <person name="Nakagawa K."/>
            <person name="Okumura K."/>
            <person name="Nagase T."/>
            <person name="Nomura N."/>
            <person name="Kikuchi H."/>
            <person name="Masuho Y."/>
            <person name="Yamashita R."/>
            <person name="Nakai K."/>
            <person name="Yada T."/>
            <person name="Nakamura Y."/>
            <person name="Ohara O."/>
            <person name="Isogai T."/>
            <person name="Sugano S."/>
        </authorList>
    </citation>
    <scope>NUCLEOTIDE SEQUENCE [LARGE SCALE MRNA]</scope>
    <source>
        <tissue>Brain</tissue>
    </source>
</reference>
<reference key="3">
    <citation type="journal article" date="2005" name="DNA Res.">
        <title>Signal sequence and keyword trap in silico for selection of full-length human cDNAs encoding secretion or membrane proteins from oligo-capped cDNA libraries.</title>
        <authorList>
            <person name="Otsuki T."/>
            <person name="Ota T."/>
            <person name="Nishikawa T."/>
            <person name="Hayashi K."/>
            <person name="Suzuki Y."/>
            <person name="Yamamoto J."/>
            <person name="Wakamatsu A."/>
            <person name="Kimura K."/>
            <person name="Sakamoto K."/>
            <person name="Hatano N."/>
            <person name="Kawai Y."/>
            <person name="Ishii S."/>
            <person name="Saito K."/>
            <person name="Kojima S."/>
            <person name="Sugiyama T."/>
            <person name="Ono T."/>
            <person name="Okano K."/>
            <person name="Yoshikawa Y."/>
            <person name="Aotsuka S."/>
            <person name="Sasaki N."/>
            <person name="Hattori A."/>
            <person name="Okumura K."/>
            <person name="Nagai K."/>
            <person name="Sugano S."/>
            <person name="Isogai T."/>
        </authorList>
    </citation>
    <scope>NUCLEOTIDE SEQUENCE [LARGE SCALE MRNA]</scope>
    <scope>VARIANT VAL-206</scope>
    <source>
        <tissue>Teratocarcinoma</tissue>
    </source>
</reference>
<reference key="4">
    <citation type="journal article" date="2004" name="Nature">
        <title>The DNA sequence and comparative analysis of human chromosome 10.</title>
        <authorList>
            <person name="Deloukas P."/>
            <person name="Earthrowl M.E."/>
            <person name="Grafham D.V."/>
            <person name="Rubenfield M."/>
            <person name="French L."/>
            <person name="Steward C.A."/>
            <person name="Sims S.K."/>
            <person name="Jones M.C."/>
            <person name="Searle S."/>
            <person name="Scott C."/>
            <person name="Howe K."/>
            <person name="Hunt S.E."/>
            <person name="Andrews T.D."/>
            <person name="Gilbert J.G.R."/>
            <person name="Swarbreck D."/>
            <person name="Ashurst J.L."/>
            <person name="Taylor A."/>
            <person name="Battles J."/>
            <person name="Bird C.P."/>
            <person name="Ainscough R."/>
            <person name="Almeida J.P."/>
            <person name="Ashwell R.I.S."/>
            <person name="Ambrose K.D."/>
            <person name="Babbage A.K."/>
            <person name="Bagguley C.L."/>
            <person name="Bailey J."/>
            <person name="Banerjee R."/>
            <person name="Bates K."/>
            <person name="Beasley H."/>
            <person name="Bray-Allen S."/>
            <person name="Brown A.J."/>
            <person name="Brown J.Y."/>
            <person name="Burford D.C."/>
            <person name="Burrill W."/>
            <person name="Burton J."/>
            <person name="Cahill P."/>
            <person name="Camire D."/>
            <person name="Carter N.P."/>
            <person name="Chapman J.C."/>
            <person name="Clark S.Y."/>
            <person name="Clarke G."/>
            <person name="Clee C.M."/>
            <person name="Clegg S."/>
            <person name="Corby N."/>
            <person name="Coulson A."/>
            <person name="Dhami P."/>
            <person name="Dutta I."/>
            <person name="Dunn M."/>
            <person name="Faulkner L."/>
            <person name="Frankish A."/>
            <person name="Frankland J.A."/>
            <person name="Garner P."/>
            <person name="Garnett J."/>
            <person name="Gribble S."/>
            <person name="Griffiths C."/>
            <person name="Grocock R."/>
            <person name="Gustafson E."/>
            <person name="Hammond S."/>
            <person name="Harley J.L."/>
            <person name="Hart E."/>
            <person name="Heath P.D."/>
            <person name="Ho T.P."/>
            <person name="Hopkins B."/>
            <person name="Horne J."/>
            <person name="Howden P.J."/>
            <person name="Huckle E."/>
            <person name="Hynds C."/>
            <person name="Johnson C."/>
            <person name="Johnson D."/>
            <person name="Kana A."/>
            <person name="Kay M."/>
            <person name="Kimberley A.M."/>
            <person name="Kershaw J.K."/>
            <person name="Kokkinaki M."/>
            <person name="Laird G.K."/>
            <person name="Lawlor S."/>
            <person name="Lee H.M."/>
            <person name="Leongamornlert D.A."/>
            <person name="Laird G."/>
            <person name="Lloyd C."/>
            <person name="Lloyd D.M."/>
            <person name="Loveland J."/>
            <person name="Lovell J."/>
            <person name="McLaren S."/>
            <person name="McLay K.E."/>
            <person name="McMurray A."/>
            <person name="Mashreghi-Mohammadi M."/>
            <person name="Matthews L."/>
            <person name="Milne S."/>
            <person name="Nickerson T."/>
            <person name="Nguyen M."/>
            <person name="Overton-Larty E."/>
            <person name="Palmer S.A."/>
            <person name="Pearce A.V."/>
            <person name="Peck A.I."/>
            <person name="Pelan S."/>
            <person name="Phillimore B."/>
            <person name="Porter K."/>
            <person name="Rice C.M."/>
            <person name="Rogosin A."/>
            <person name="Ross M.T."/>
            <person name="Sarafidou T."/>
            <person name="Sehra H.K."/>
            <person name="Shownkeen R."/>
            <person name="Skuce C.D."/>
            <person name="Smith M."/>
            <person name="Standring L."/>
            <person name="Sycamore N."/>
            <person name="Tester J."/>
            <person name="Thorpe A."/>
            <person name="Torcasso W."/>
            <person name="Tracey A."/>
            <person name="Tromans A."/>
            <person name="Tsolas J."/>
            <person name="Wall M."/>
            <person name="Walsh J."/>
            <person name="Wang H."/>
            <person name="Weinstock K."/>
            <person name="West A.P."/>
            <person name="Willey D.L."/>
            <person name="Whitehead S.L."/>
            <person name="Wilming L."/>
            <person name="Wray P.W."/>
            <person name="Young L."/>
            <person name="Chen Y."/>
            <person name="Lovering R.C."/>
            <person name="Moschonas N.K."/>
            <person name="Siebert R."/>
            <person name="Fechtel K."/>
            <person name="Bentley D."/>
            <person name="Durbin R.M."/>
            <person name="Hubbard T."/>
            <person name="Doucette-Stamm L."/>
            <person name="Beck S."/>
            <person name="Smith D.R."/>
            <person name="Rogers J."/>
        </authorList>
    </citation>
    <scope>NUCLEOTIDE SEQUENCE [LARGE SCALE GENOMIC DNA]</scope>
</reference>
<reference key="5">
    <citation type="submission" date="2005-09" db="EMBL/GenBank/DDBJ databases">
        <authorList>
            <person name="Mural R.J."/>
            <person name="Istrail S."/>
            <person name="Sutton G.G."/>
            <person name="Florea L."/>
            <person name="Halpern A.L."/>
            <person name="Mobarry C.M."/>
            <person name="Lippert R."/>
            <person name="Walenz B."/>
            <person name="Shatkay H."/>
            <person name="Dew I."/>
            <person name="Miller J.R."/>
            <person name="Flanigan M.J."/>
            <person name="Edwards N.J."/>
            <person name="Bolanos R."/>
            <person name="Fasulo D."/>
            <person name="Halldorsson B.V."/>
            <person name="Hannenhalli S."/>
            <person name="Turner R."/>
            <person name="Yooseph S."/>
            <person name="Lu F."/>
            <person name="Nusskern D.R."/>
            <person name="Shue B.C."/>
            <person name="Zheng X.H."/>
            <person name="Zhong F."/>
            <person name="Delcher A.L."/>
            <person name="Huson D.H."/>
            <person name="Kravitz S.A."/>
            <person name="Mouchard L."/>
            <person name="Reinert K."/>
            <person name="Remington K.A."/>
            <person name="Clark A.G."/>
            <person name="Waterman M.S."/>
            <person name="Eichler E.E."/>
            <person name="Adams M.D."/>
            <person name="Hunkapiller M.W."/>
            <person name="Myers E.W."/>
            <person name="Venter J.C."/>
        </authorList>
    </citation>
    <scope>NUCLEOTIDE SEQUENCE [LARGE SCALE GENOMIC DNA]</scope>
</reference>
<reference key="6">
    <citation type="journal article" date="2004" name="Genome Res.">
        <title>The status, quality, and expansion of the NIH full-length cDNA project: the Mammalian Gene Collection (MGC).</title>
        <authorList>
            <consortium name="The MGC Project Team"/>
        </authorList>
    </citation>
    <scope>NUCLEOTIDE SEQUENCE [LARGE SCALE MRNA]</scope>
    <source>
        <tissue>Brain</tissue>
    </source>
</reference>
<reference key="7">
    <citation type="journal article" date="2008" name="J. Biol. Chem.">
        <title>Effect of FGF-binding protein 3 on vascular permeability.</title>
        <authorList>
            <person name="Zhang W."/>
            <person name="Chen Y."/>
            <person name="Swift M.R."/>
            <person name="Tassi E."/>
            <person name="Stylianou D.C."/>
            <person name="Gibby K.A."/>
            <person name="Riegel A.T."/>
            <person name="Wellstein A."/>
        </authorList>
    </citation>
    <scope>FUNCTION</scope>
    <scope>INTERACTION WITH FGF2</scope>
    <scope>SUBCELLULAR LOCATION</scope>
    <scope>IDENTIFICATION BY MASS SPECTROMETRY</scope>
</reference>
<accession>Q8TAT2</accession>
<accession>B2RD68</accession>
<accession>Q8NBN0</accession>
<proteinExistence type="evidence at protein level"/>
<name>FGFP3_HUMAN</name>
<sequence>MTPPKLRASLSPSLLLLLSGCLLAAARREKGAASNVAEPVPGPTGGSSGRFLSPEQHACSWQLLLPAPEAAAGSELALRCQSPDGARHQCAYRGHPERCAAYAARRAHFWKQVLGGLRKKRRPCHDPAPLQARLCAGKKGHGAELRLVPRASPPARPTVAGFAGESKPRARNRGRTRERASGPAAGTPPPQSAPPKENPSERKTNEGKRKAALVPNEERPMGTGPDPDGLDGNAELTETYCAEKWHSLCNFFVNFWNG</sequence>
<feature type="signal peptide" evidence="2">
    <location>
        <begin position="1"/>
        <end position="26"/>
    </location>
</feature>
<feature type="chain" id="PRO_0000244264" description="Fibroblast growth factor-binding protein 3">
    <location>
        <begin position="27"/>
        <end position="258"/>
    </location>
</feature>
<feature type="region of interest" description="Disordered" evidence="3">
    <location>
        <begin position="146"/>
        <end position="231"/>
    </location>
</feature>
<feature type="compositionally biased region" description="Pro residues" evidence="3">
    <location>
        <begin position="186"/>
        <end position="197"/>
    </location>
</feature>
<feature type="compositionally biased region" description="Basic and acidic residues" evidence="3">
    <location>
        <begin position="198"/>
        <end position="209"/>
    </location>
</feature>
<feature type="disulfide bond" evidence="1">
    <location>
        <begin position="59"/>
        <end position="80"/>
    </location>
</feature>
<feature type="disulfide bond" evidence="1">
    <location>
        <begin position="90"/>
        <end position="124"/>
    </location>
</feature>
<feature type="disulfide bond" evidence="1">
    <location>
        <begin position="241"/>
        <end position="249"/>
    </location>
</feature>
<feature type="sequence variant" id="VAR_059288" description="In dbSNP:rs10881994.">
    <original>A</original>
    <variation>T</variation>
    <location>
        <position position="107"/>
    </location>
</feature>
<feature type="sequence variant" id="VAR_026888" description="In dbSNP:rs1107947." evidence="4">
    <original>E</original>
    <variation>V</variation>
    <location>
        <position position="206"/>
    </location>
</feature>
<keyword id="KW-1015">Disulfide bond</keyword>
<keyword id="KW-0340">Growth factor binding</keyword>
<keyword id="KW-0358">Heparin-binding</keyword>
<keyword id="KW-1267">Proteomics identification</keyword>
<keyword id="KW-1185">Reference proteome</keyword>
<keyword id="KW-0964">Secreted</keyword>
<keyword id="KW-0732">Signal</keyword>
<protein>
    <recommendedName>
        <fullName>Fibroblast growth factor-binding protein 3</fullName>
        <shortName>FGF-BP3</shortName>
        <shortName>FGF-binding protein 3</shortName>
        <shortName>FGFBP-3</shortName>
    </recommendedName>
</protein>
<dbReference type="EMBL" id="DQ503576">
    <property type="protein sequence ID" value="ABF56582.1"/>
    <property type="molecule type" value="mRNA"/>
</dbReference>
<dbReference type="EMBL" id="AK075410">
    <property type="protein sequence ID" value="BAC11602.1"/>
    <property type="molecule type" value="mRNA"/>
</dbReference>
<dbReference type="EMBL" id="AK315427">
    <property type="protein sequence ID" value="BAG37815.1"/>
    <property type="molecule type" value="mRNA"/>
</dbReference>
<dbReference type="EMBL" id="AL359198">
    <property type="status" value="NOT_ANNOTATED_CDS"/>
    <property type="molecule type" value="Genomic_DNA"/>
</dbReference>
<dbReference type="EMBL" id="CH471066">
    <property type="protein sequence ID" value="EAW50104.1"/>
    <property type="molecule type" value="Genomic_DNA"/>
</dbReference>
<dbReference type="EMBL" id="BC025966">
    <property type="protein sequence ID" value="AAH25966.1"/>
    <property type="molecule type" value="mRNA"/>
</dbReference>
<dbReference type="CCDS" id="CCDS7418.1"/>
<dbReference type="RefSeq" id="NP_689642.3">
    <property type="nucleotide sequence ID" value="NM_152429.4"/>
</dbReference>
<dbReference type="SMR" id="Q8TAT2"/>
<dbReference type="BioGRID" id="126795">
    <property type="interactions" value="1"/>
</dbReference>
<dbReference type="FunCoup" id="Q8TAT2">
    <property type="interactions" value="93"/>
</dbReference>
<dbReference type="STRING" id="9606.ENSP00000339067"/>
<dbReference type="GlyGen" id="Q8TAT2">
    <property type="glycosylation" value="3 sites, 1 O-linked glycan (2 sites)"/>
</dbReference>
<dbReference type="iPTMnet" id="Q8TAT2"/>
<dbReference type="PhosphoSitePlus" id="Q8TAT2"/>
<dbReference type="BioMuta" id="FGFBP3"/>
<dbReference type="DMDM" id="74751362"/>
<dbReference type="jPOST" id="Q8TAT2"/>
<dbReference type="MassIVE" id="Q8TAT2"/>
<dbReference type="PaxDb" id="9606-ENSP00000339067"/>
<dbReference type="PeptideAtlas" id="Q8TAT2"/>
<dbReference type="ProteomicsDB" id="73915"/>
<dbReference type="Pumba" id="Q8TAT2"/>
<dbReference type="Antibodypedia" id="52908">
    <property type="antibodies" value="86 antibodies from 22 providers"/>
</dbReference>
<dbReference type="DNASU" id="143282"/>
<dbReference type="Ensembl" id="ENST00000311575.6">
    <property type="protein sequence ID" value="ENSP00000339067.3"/>
    <property type="gene ID" value="ENSG00000174721.10"/>
</dbReference>
<dbReference type="GeneID" id="143282"/>
<dbReference type="KEGG" id="hsa:143282"/>
<dbReference type="MANE-Select" id="ENST00000311575.6">
    <property type="protein sequence ID" value="ENSP00000339067.3"/>
    <property type="RefSeq nucleotide sequence ID" value="NM_152429.5"/>
    <property type="RefSeq protein sequence ID" value="NP_689642.3"/>
</dbReference>
<dbReference type="UCSC" id="uc001khq.5">
    <property type="organism name" value="human"/>
</dbReference>
<dbReference type="AGR" id="HGNC:23428"/>
<dbReference type="CTD" id="143282"/>
<dbReference type="DisGeNET" id="143282"/>
<dbReference type="GeneCards" id="FGFBP3"/>
<dbReference type="HGNC" id="HGNC:23428">
    <property type="gene designation" value="FGFBP3"/>
</dbReference>
<dbReference type="HPA" id="ENSG00000174721">
    <property type="expression patterns" value="Tissue enhanced (brain)"/>
</dbReference>
<dbReference type="MIM" id="620879">
    <property type="type" value="gene"/>
</dbReference>
<dbReference type="neXtProt" id="NX_Q8TAT2"/>
<dbReference type="OpenTargets" id="ENSG00000174721"/>
<dbReference type="PharmGKB" id="PA162388444"/>
<dbReference type="VEuPathDB" id="HostDB:ENSG00000174721"/>
<dbReference type="eggNOG" id="ENOG502S2Z7">
    <property type="taxonomic scope" value="Eukaryota"/>
</dbReference>
<dbReference type="GeneTree" id="ENSGT00940000154372"/>
<dbReference type="HOGENOM" id="CLU_1111111_0_0_1"/>
<dbReference type="InParanoid" id="Q8TAT2"/>
<dbReference type="OMA" id="QCAYRGE"/>
<dbReference type="OrthoDB" id="8803710at2759"/>
<dbReference type="PAN-GO" id="Q8TAT2">
    <property type="GO annotations" value="2 GO annotations based on evolutionary models"/>
</dbReference>
<dbReference type="PhylomeDB" id="Q8TAT2"/>
<dbReference type="TreeFam" id="TF335877"/>
<dbReference type="PathwayCommons" id="Q8TAT2"/>
<dbReference type="Reactome" id="R-HSA-190377">
    <property type="pathway name" value="FGFR2b ligand binding and activation"/>
</dbReference>
<dbReference type="BioGRID-ORCS" id="143282">
    <property type="hits" value="16 hits in 1149 CRISPR screens"/>
</dbReference>
<dbReference type="GenomeRNAi" id="143282"/>
<dbReference type="Pharos" id="Q8TAT2">
    <property type="development level" value="Tbio"/>
</dbReference>
<dbReference type="PRO" id="PR:Q8TAT2"/>
<dbReference type="Proteomes" id="UP000005640">
    <property type="component" value="Chromosome 10"/>
</dbReference>
<dbReference type="RNAct" id="Q8TAT2">
    <property type="molecule type" value="protein"/>
</dbReference>
<dbReference type="Bgee" id="ENSG00000174721">
    <property type="expression patterns" value="Expressed in ventricular zone and 104 other cell types or tissues"/>
</dbReference>
<dbReference type="GO" id="GO:0062023">
    <property type="term" value="C:collagen-containing extracellular matrix"/>
    <property type="evidence" value="ECO:0007005"/>
    <property type="project" value="UniProtKB"/>
</dbReference>
<dbReference type="GO" id="GO:0005576">
    <property type="term" value="C:extracellular region"/>
    <property type="evidence" value="ECO:0000314"/>
    <property type="project" value="MGI"/>
</dbReference>
<dbReference type="GO" id="GO:0017134">
    <property type="term" value="F:fibroblast growth factor binding"/>
    <property type="evidence" value="ECO:0000353"/>
    <property type="project" value="MGI"/>
</dbReference>
<dbReference type="GO" id="GO:0019838">
    <property type="term" value="F:growth factor binding"/>
    <property type="evidence" value="ECO:0000318"/>
    <property type="project" value="GO_Central"/>
</dbReference>
<dbReference type="GO" id="GO:0008201">
    <property type="term" value="F:heparin binding"/>
    <property type="evidence" value="ECO:0000314"/>
    <property type="project" value="MGI"/>
</dbReference>
<dbReference type="GO" id="GO:0007267">
    <property type="term" value="P:cell-cell signaling"/>
    <property type="evidence" value="ECO:0000318"/>
    <property type="project" value="GO_Central"/>
</dbReference>
<dbReference type="GO" id="GO:0045743">
    <property type="term" value="P:positive regulation of fibroblast growth factor receptor signaling pathway"/>
    <property type="evidence" value="ECO:0000316"/>
    <property type="project" value="MGI"/>
</dbReference>
<dbReference type="GO" id="GO:0043117">
    <property type="term" value="P:positive regulation of vascular permeability"/>
    <property type="evidence" value="ECO:0000314"/>
    <property type="project" value="MGI"/>
</dbReference>
<dbReference type="InterPro" id="IPR010510">
    <property type="entry name" value="FGF1-bd"/>
</dbReference>
<dbReference type="PANTHER" id="PTHR15258">
    <property type="entry name" value="FGF BINDING PROTEIN-RELATED"/>
    <property type="match status" value="1"/>
</dbReference>
<dbReference type="PANTHER" id="PTHR15258:SF3">
    <property type="entry name" value="FIBROBLAST GROWTH FACTOR-BINDING PROTEIN 3"/>
    <property type="match status" value="1"/>
</dbReference>
<dbReference type="Pfam" id="PF06473">
    <property type="entry name" value="FGF-BP1"/>
    <property type="match status" value="1"/>
</dbReference>